<dbReference type="EC" id="3.6.4.-" evidence="1"/>
<dbReference type="EMBL" id="BA000016">
    <property type="protein sequence ID" value="BAB81653.1"/>
    <property type="molecule type" value="Genomic_DNA"/>
</dbReference>
<dbReference type="RefSeq" id="WP_011010700.1">
    <property type="nucleotide sequence ID" value="NC_003366.1"/>
</dbReference>
<dbReference type="SMR" id="Q8XJ14"/>
<dbReference type="STRING" id="195102.gene:10491216"/>
<dbReference type="KEGG" id="cpe:CPE1947"/>
<dbReference type="HOGENOM" id="CLU_055599_1_0_9"/>
<dbReference type="Proteomes" id="UP000000818">
    <property type="component" value="Chromosome"/>
</dbReference>
<dbReference type="GO" id="GO:0005737">
    <property type="term" value="C:cytoplasm"/>
    <property type="evidence" value="ECO:0007669"/>
    <property type="project" value="UniProtKB-SubCell"/>
</dbReference>
<dbReference type="GO" id="GO:0048476">
    <property type="term" value="C:Holliday junction resolvase complex"/>
    <property type="evidence" value="ECO:0007669"/>
    <property type="project" value="UniProtKB-UniRule"/>
</dbReference>
<dbReference type="GO" id="GO:0005524">
    <property type="term" value="F:ATP binding"/>
    <property type="evidence" value="ECO:0007669"/>
    <property type="project" value="UniProtKB-UniRule"/>
</dbReference>
<dbReference type="GO" id="GO:0016887">
    <property type="term" value="F:ATP hydrolysis activity"/>
    <property type="evidence" value="ECO:0007669"/>
    <property type="project" value="InterPro"/>
</dbReference>
<dbReference type="GO" id="GO:0000400">
    <property type="term" value="F:four-way junction DNA binding"/>
    <property type="evidence" value="ECO:0007669"/>
    <property type="project" value="UniProtKB-UniRule"/>
</dbReference>
<dbReference type="GO" id="GO:0009378">
    <property type="term" value="F:four-way junction helicase activity"/>
    <property type="evidence" value="ECO:0007669"/>
    <property type="project" value="InterPro"/>
</dbReference>
<dbReference type="GO" id="GO:0006310">
    <property type="term" value="P:DNA recombination"/>
    <property type="evidence" value="ECO:0007669"/>
    <property type="project" value="UniProtKB-UniRule"/>
</dbReference>
<dbReference type="GO" id="GO:0006281">
    <property type="term" value="P:DNA repair"/>
    <property type="evidence" value="ECO:0007669"/>
    <property type="project" value="UniProtKB-UniRule"/>
</dbReference>
<dbReference type="CDD" id="cd00009">
    <property type="entry name" value="AAA"/>
    <property type="match status" value="1"/>
</dbReference>
<dbReference type="Gene3D" id="1.10.8.60">
    <property type="match status" value="1"/>
</dbReference>
<dbReference type="Gene3D" id="3.40.50.300">
    <property type="entry name" value="P-loop containing nucleotide triphosphate hydrolases"/>
    <property type="match status" value="1"/>
</dbReference>
<dbReference type="Gene3D" id="1.10.10.10">
    <property type="entry name" value="Winged helix-like DNA-binding domain superfamily/Winged helix DNA-binding domain"/>
    <property type="match status" value="1"/>
</dbReference>
<dbReference type="HAMAP" id="MF_00016">
    <property type="entry name" value="DNA_HJ_migration_RuvB"/>
    <property type="match status" value="1"/>
</dbReference>
<dbReference type="InterPro" id="IPR003593">
    <property type="entry name" value="AAA+_ATPase"/>
</dbReference>
<dbReference type="InterPro" id="IPR041445">
    <property type="entry name" value="AAA_lid_4"/>
</dbReference>
<dbReference type="InterPro" id="IPR004605">
    <property type="entry name" value="DNA_helicase_Holl-junc_RuvB"/>
</dbReference>
<dbReference type="InterPro" id="IPR027417">
    <property type="entry name" value="P-loop_NTPase"/>
</dbReference>
<dbReference type="InterPro" id="IPR008824">
    <property type="entry name" value="RuvB-like_N"/>
</dbReference>
<dbReference type="InterPro" id="IPR008823">
    <property type="entry name" value="RuvB_C"/>
</dbReference>
<dbReference type="InterPro" id="IPR036388">
    <property type="entry name" value="WH-like_DNA-bd_sf"/>
</dbReference>
<dbReference type="InterPro" id="IPR036390">
    <property type="entry name" value="WH_DNA-bd_sf"/>
</dbReference>
<dbReference type="NCBIfam" id="NF000868">
    <property type="entry name" value="PRK00080.1"/>
    <property type="match status" value="1"/>
</dbReference>
<dbReference type="NCBIfam" id="TIGR00635">
    <property type="entry name" value="ruvB"/>
    <property type="match status" value="1"/>
</dbReference>
<dbReference type="PANTHER" id="PTHR42848">
    <property type="match status" value="1"/>
</dbReference>
<dbReference type="PANTHER" id="PTHR42848:SF1">
    <property type="entry name" value="HOLLIDAY JUNCTION BRANCH MIGRATION COMPLEX SUBUNIT RUVB"/>
    <property type="match status" value="1"/>
</dbReference>
<dbReference type="Pfam" id="PF17864">
    <property type="entry name" value="AAA_lid_4"/>
    <property type="match status" value="1"/>
</dbReference>
<dbReference type="Pfam" id="PF05491">
    <property type="entry name" value="RuvB_C"/>
    <property type="match status" value="1"/>
</dbReference>
<dbReference type="Pfam" id="PF05496">
    <property type="entry name" value="RuvB_N"/>
    <property type="match status" value="1"/>
</dbReference>
<dbReference type="SMART" id="SM00382">
    <property type="entry name" value="AAA"/>
    <property type="match status" value="1"/>
</dbReference>
<dbReference type="SUPFAM" id="SSF52540">
    <property type="entry name" value="P-loop containing nucleoside triphosphate hydrolases"/>
    <property type="match status" value="1"/>
</dbReference>
<dbReference type="SUPFAM" id="SSF46785">
    <property type="entry name" value="Winged helix' DNA-binding domain"/>
    <property type="match status" value="1"/>
</dbReference>
<keyword id="KW-0067">ATP-binding</keyword>
<keyword id="KW-0963">Cytoplasm</keyword>
<keyword id="KW-0227">DNA damage</keyword>
<keyword id="KW-0233">DNA recombination</keyword>
<keyword id="KW-0234">DNA repair</keyword>
<keyword id="KW-0238">DNA-binding</keyword>
<keyword id="KW-0378">Hydrolase</keyword>
<keyword id="KW-0547">Nucleotide-binding</keyword>
<keyword id="KW-1185">Reference proteome</keyword>
<reference key="1">
    <citation type="journal article" date="2002" name="Proc. Natl. Acad. Sci. U.S.A.">
        <title>Complete genome sequence of Clostridium perfringens, an anaerobic flesh-eater.</title>
        <authorList>
            <person name="Shimizu T."/>
            <person name="Ohtani K."/>
            <person name="Hirakawa H."/>
            <person name="Ohshima K."/>
            <person name="Yamashita A."/>
            <person name="Shiba T."/>
            <person name="Ogasawara N."/>
            <person name="Hattori M."/>
            <person name="Kuhara S."/>
            <person name="Hayashi H."/>
        </authorList>
    </citation>
    <scope>NUCLEOTIDE SEQUENCE [LARGE SCALE GENOMIC DNA]</scope>
    <source>
        <strain>13 / Type A</strain>
    </source>
</reference>
<comment type="function">
    <text evidence="1">The RuvA-RuvB-RuvC complex processes Holliday junction (HJ) DNA during genetic recombination and DNA repair, while the RuvA-RuvB complex plays an important role in the rescue of blocked DNA replication forks via replication fork reversal (RFR). RuvA specifically binds to HJ cruciform DNA, conferring on it an open structure. The RuvB hexamer acts as an ATP-dependent pump, pulling dsDNA into and through the RuvAB complex. RuvB forms 2 homohexamers on either side of HJ DNA bound by 1 or 2 RuvA tetramers; 4 subunits per hexamer contact DNA at a time. Coordinated motions by a converter formed by DNA-disengaged RuvB subunits stimulates ATP hydrolysis and nucleotide exchange. Immobilization of the converter enables RuvB to convert the ATP-contained energy into a lever motion, pulling 2 nucleotides of DNA out of the RuvA tetramer per ATP hydrolyzed, thus driving DNA branch migration. The RuvB motors rotate together with the DNA substrate, which together with the progressing nucleotide cycle form the mechanistic basis for DNA recombination by continuous HJ branch migration. Branch migration allows RuvC to scan DNA until it finds its consensus sequence, where it cleaves and resolves cruciform DNA.</text>
</comment>
<comment type="catalytic activity">
    <reaction evidence="1">
        <text>ATP + H2O = ADP + phosphate + H(+)</text>
        <dbReference type="Rhea" id="RHEA:13065"/>
        <dbReference type="ChEBI" id="CHEBI:15377"/>
        <dbReference type="ChEBI" id="CHEBI:15378"/>
        <dbReference type="ChEBI" id="CHEBI:30616"/>
        <dbReference type="ChEBI" id="CHEBI:43474"/>
        <dbReference type="ChEBI" id="CHEBI:456216"/>
    </reaction>
</comment>
<comment type="subunit">
    <text evidence="1">Homohexamer. Forms an RuvA(8)-RuvB(12)-Holliday junction (HJ) complex. HJ DNA is sandwiched between 2 RuvA tetramers; dsDNA enters through RuvA and exits via RuvB. An RuvB hexamer assembles on each DNA strand where it exits the tetramer. Each RuvB hexamer is contacted by two RuvA subunits (via domain III) on 2 adjacent RuvB subunits; this complex drives branch migration. In the full resolvosome a probable DNA-RuvA(4)-RuvB(12)-RuvC(2) complex forms which resolves the HJ.</text>
</comment>
<comment type="subcellular location">
    <subcellularLocation>
        <location evidence="1">Cytoplasm</location>
    </subcellularLocation>
</comment>
<comment type="domain">
    <text evidence="1">Has 3 domains, the large (RuvB-L) and small ATPase (RuvB-S) domains and the C-terminal head (RuvB-H) domain. The head domain binds DNA, while the ATPase domains jointly bind ATP, ADP or are empty depending on the state of the subunit in the translocation cycle. During a single DNA translocation step the structure of each domain remains the same, but their relative positions change.</text>
</comment>
<comment type="similarity">
    <text evidence="1">Belongs to the RuvB family.</text>
</comment>
<evidence type="ECO:0000255" key="1">
    <source>
        <dbReference type="HAMAP-Rule" id="MF_00016"/>
    </source>
</evidence>
<proteinExistence type="inferred from homology"/>
<accession>Q8XJ14</accession>
<feature type="chain" id="PRO_0000165520" description="Holliday junction branch migration complex subunit RuvB">
    <location>
        <begin position="1"/>
        <end position="346"/>
    </location>
</feature>
<feature type="region of interest" description="Large ATPase domain (RuvB-L)" evidence="1">
    <location>
        <begin position="1"/>
        <end position="182"/>
    </location>
</feature>
<feature type="region of interest" description="Small ATPAse domain (RuvB-S)" evidence="1">
    <location>
        <begin position="183"/>
        <end position="253"/>
    </location>
</feature>
<feature type="region of interest" description="Head domain (RuvB-H)" evidence="1">
    <location>
        <begin position="256"/>
        <end position="346"/>
    </location>
</feature>
<feature type="binding site" evidence="1">
    <location>
        <position position="21"/>
    </location>
    <ligand>
        <name>ATP</name>
        <dbReference type="ChEBI" id="CHEBI:30616"/>
    </ligand>
</feature>
<feature type="binding site" evidence="1">
    <location>
        <position position="22"/>
    </location>
    <ligand>
        <name>ATP</name>
        <dbReference type="ChEBI" id="CHEBI:30616"/>
    </ligand>
</feature>
<feature type="binding site" evidence="1">
    <location>
        <position position="63"/>
    </location>
    <ligand>
        <name>ATP</name>
        <dbReference type="ChEBI" id="CHEBI:30616"/>
    </ligand>
</feature>
<feature type="binding site" evidence="1">
    <location>
        <position position="66"/>
    </location>
    <ligand>
        <name>ATP</name>
        <dbReference type="ChEBI" id="CHEBI:30616"/>
    </ligand>
</feature>
<feature type="binding site" evidence="1">
    <location>
        <position position="67"/>
    </location>
    <ligand>
        <name>ATP</name>
        <dbReference type="ChEBI" id="CHEBI:30616"/>
    </ligand>
</feature>
<feature type="binding site" evidence="1">
    <location>
        <position position="67"/>
    </location>
    <ligand>
        <name>Mg(2+)</name>
        <dbReference type="ChEBI" id="CHEBI:18420"/>
    </ligand>
</feature>
<feature type="binding site" evidence="1">
    <location>
        <position position="68"/>
    </location>
    <ligand>
        <name>ATP</name>
        <dbReference type="ChEBI" id="CHEBI:30616"/>
    </ligand>
</feature>
<feature type="binding site" evidence="1">
    <location>
        <begin position="129"/>
        <end position="131"/>
    </location>
    <ligand>
        <name>ATP</name>
        <dbReference type="ChEBI" id="CHEBI:30616"/>
    </ligand>
</feature>
<feature type="binding site" evidence="1">
    <location>
        <position position="172"/>
    </location>
    <ligand>
        <name>ATP</name>
        <dbReference type="ChEBI" id="CHEBI:30616"/>
    </ligand>
</feature>
<feature type="binding site" evidence="1">
    <location>
        <position position="182"/>
    </location>
    <ligand>
        <name>ATP</name>
        <dbReference type="ChEBI" id="CHEBI:30616"/>
    </ligand>
</feature>
<feature type="binding site" evidence="1">
    <location>
        <position position="219"/>
    </location>
    <ligand>
        <name>ATP</name>
        <dbReference type="ChEBI" id="CHEBI:30616"/>
    </ligand>
</feature>
<feature type="binding site" evidence="1">
    <location>
        <position position="311"/>
    </location>
    <ligand>
        <name>DNA</name>
        <dbReference type="ChEBI" id="CHEBI:16991"/>
    </ligand>
</feature>
<feature type="binding site" evidence="1">
    <location>
        <position position="316"/>
    </location>
    <ligand>
        <name>DNA</name>
        <dbReference type="ChEBI" id="CHEBI:16991"/>
    </ligand>
</feature>
<sequence>MSERLVTSNEIGIDSTNEYSLRPEKINEYIGQDKVKERLNIFIKAAQRREEALDHVILYGPPGLGKTTLANIIANEMGGNLKITSGPAIERAGDLAAILTTLNTNDVLFIDEIHRLNRSVEEILYPAMEDYVLDIIIGKGAASKSIRLDLPKFTLIGATTRIGMLSSPLRDRLGVLCSMEYYTDEQLKEIIIRSAEILGCHITEEGAFEIAKRSRGTPRIANRLLKRVRDFAEVLYDNEITEEAAKKSLEILEVDGEGFDRIDNKILEAIIDNFNGGPVGIETLAYFVGEELDTIEDVYEPYLLQKGFIVRTPRGRMATDKAYKHLGRVRFNESKIDSKQCTLFEK</sequence>
<protein>
    <recommendedName>
        <fullName evidence="1">Holliday junction branch migration complex subunit RuvB</fullName>
        <ecNumber evidence="1">3.6.4.-</ecNumber>
    </recommendedName>
</protein>
<organism>
    <name type="scientific">Clostridium perfringens (strain 13 / Type A)</name>
    <dbReference type="NCBI Taxonomy" id="195102"/>
    <lineage>
        <taxon>Bacteria</taxon>
        <taxon>Bacillati</taxon>
        <taxon>Bacillota</taxon>
        <taxon>Clostridia</taxon>
        <taxon>Eubacteriales</taxon>
        <taxon>Clostridiaceae</taxon>
        <taxon>Clostridium</taxon>
    </lineage>
</organism>
<gene>
    <name evidence="1" type="primary">ruvB</name>
    <name type="ordered locus">CPE1947</name>
</gene>
<name>RUVB_CLOPE</name>